<dbReference type="EC" id="2.7.4.6" evidence="1"/>
<dbReference type="EMBL" id="CP000576">
    <property type="protein sequence ID" value="ABO16672.1"/>
    <property type="molecule type" value="Genomic_DNA"/>
</dbReference>
<dbReference type="RefSeq" id="WP_011862077.1">
    <property type="nucleotide sequence ID" value="NC_009091.1"/>
</dbReference>
<dbReference type="SMR" id="A3PA97"/>
<dbReference type="STRING" id="167546.P9301_00491"/>
<dbReference type="KEGG" id="pmg:P9301_00491"/>
<dbReference type="eggNOG" id="COG0105">
    <property type="taxonomic scope" value="Bacteria"/>
</dbReference>
<dbReference type="HOGENOM" id="CLU_060216_6_3_3"/>
<dbReference type="OrthoDB" id="9801161at2"/>
<dbReference type="Proteomes" id="UP000001430">
    <property type="component" value="Chromosome"/>
</dbReference>
<dbReference type="GO" id="GO:0005737">
    <property type="term" value="C:cytoplasm"/>
    <property type="evidence" value="ECO:0007669"/>
    <property type="project" value="UniProtKB-SubCell"/>
</dbReference>
<dbReference type="GO" id="GO:0005524">
    <property type="term" value="F:ATP binding"/>
    <property type="evidence" value="ECO:0007669"/>
    <property type="project" value="UniProtKB-UniRule"/>
</dbReference>
<dbReference type="GO" id="GO:0046872">
    <property type="term" value="F:metal ion binding"/>
    <property type="evidence" value="ECO:0007669"/>
    <property type="project" value="UniProtKB-KW"/>
</dbReference>
<dbReference type="GO" id="GO:0004550">
    <property type="term" value="F:nucleoside diphosphate kinase activity"/>
    <property type="evidence" value="ECO:0007669"/>
    <property type="project" value="UniProtKB-UniRule"/>
</dbReference>
<dbReference type="GO" id="GO:0006241">
    <property type="term" value="P:CTP biosynthetic process"/>
    <property type="evidence" value="ECO:0007669"/>
    <property type="project" value="UniProtKB-UniRule"/>
</dbReference>
<dbReference type="GO" id="GO:0006183">
    <property type="term" value="P:GTP biosynthetic process"/>
    <property type="evidence" value="ECO:0007669"/>
    <property type="project" value="UniProtKB-UniRule"/>
</dbReference>
<dbReference type="GO" id="GO:0006228">
    <property type="term" value="P:UTP biosynthetic process"/>
    <property type="evidence" value="ECO:0007669"/>
    <property type="project" value="UniProtKB-UniRule"/>
</dbReference>
<dbReference type="CDD" id="cd04413">
    <property type="entry name" value="NDPk_I"/>
    <property type="match status" value="1"/>
</dbReference>
<dbReference type="FunFam" id="3.30.70.141:FF:000002">
    <property type="entry name" value="Nucleoside diphosphate kinase"/>
    <property type="match status" value="1"/>
</dbReference>
<dbReference type="Gene3D" id="3.30.70.141">
    <property type="entry name" value="Nucleoside diphosphate kinase-like domain"/>
    <property type="match status" value="1"/>
</dbReference>
<dbReference type="HAMAP" id="MF_00451">
    <property type="entry name" value="NDP_kinase"/>
    <property type="match status" value="1"/>
</dbReference>
<dbReference type="InterPro" id="IPR034907">
    <property type="entry name" value="NDK-like_dom"/>
</dbReference>
<dbReference type="InterPro" id="IPR036850">
    <property type="entry name" value="NDK-like_dom_sf"/>
</dbReference>
<dbReference type="InterPro" id="IPR001564">
    <property type="entry name" value="Nucleoside_diP_kinase"/>
</dbReference>
<dbReference type="InterPro" id="IPR023005">
    <property type="entry name" value="Nucleoside_diP_kinase_AS"/>
</dbReference>
<dbReference type="NCBIfam" id="NF001908">
    <property type="entry name" value="PRK00668.1"/>
    <property type="match status" value="1"/>
</dbReference>
<dbReference type="PANTHER" id="PTHR11349">
    <property type="entry name" value="NUCLEOSIDE DIPHOSPHATE KINASE"/>
    <property type="match status" value="1"/>
</dbReference>
<dbReference type="Pfam" id="PF00334">
    <property type="entry name" value="NDK"/>
    <property type="match status" value="1"/>
</dbReference>
<dbReference type="PRINTS" id="PR01243">
    <property type="entry name" value="NUCDPKINASE"/>
</dbReference>
<dbReference type="SMART" id="SM00562">
    <property type="entry name" value="NDK"/>
    <property type="match status" value="1"/>
</dbReference>
<dbReference type="SUPFAM" id="SSF54919">
    <property type="entry name" value="Nucleoside diphosphate kinase, NDK"/>
    <property type="match status" value="1"/>
</dbReference>
<dbReference type="PROSITE" id="PS00469">
    <property type="entry name" value="NDPK"/>
    <property type="match status" value="1"/>
</dbReference>
<dbReference type="PROSITE" id="PS51374">
    <property type="entry name" value="NDPK_LIKE"/>
    <property type="match status" value="1"/>
</dbReference>
<accession>A3PA97</accession>
<organism>
    <name type="scientific">Prochlorococcus marinus (strain MIT 9301)</name>
    <dbReference type="NCBI Taxonomy" id="167546"/>
    <lineage>
        <taxon>Bacteria</taxon>
        <taxon>Bacillati</taxon>
        <taxon>Cyanobacteriota</taxon>
        <taxon>Cyanophyceae</taxon>
        <taxon>Synechococcales</taxon>
        <taxon>Prochlorococcaceae</taxon>
        <taxon>Prochlorococcus</taxon>
    </lineage>
</organism>
<protein>
    <recommendedName>
        <fullName evidence="1">Nucleoside diphosphate kinase</fullName>
        <shortName evidence="1">NDK</shortName>
        <shortName evidence="1">NDP kinase</shortName>
        <ecNumber evidence="1">2.7.4.6</ecNumber>
    </recommendedName>
    <alternativeName>
        <fullName evidence="1">Nucleoside-2-P kinase</fullName>
    </alternativeName>
</protein>
<reference key="1">
    <citation type="journal article" date="2007" name="PLoS Genet.">
        <title>Patterns and implications of gene gain and loss in the evolution of Prochlorococcus.</title>
        <authorList>
            <person name="Kettler G.C."/>
            <person name="Martiny A.C."/>
            <person name="Huang K."/>
            <person name="Zucker J."/>
            <person name="Coleman M.L."/>
            <person name="Rodrigue S."/>
            <person name="Chen F."/>
            <person name="Lapidus A."/>
            <person name="Ferriera S."/>
            <person name="Johnson J."/>
            <person name="Steglich C."/>
            <person name="Church G.M."/>
            <person name="Richardson P."/>
            <person name="Chisholm S.W."/>
        </authorList>
    </citation>
    <scope>NUCLEOTIDE SEQUENCE [LARGE SCALE GENOMIC DNA]</scope>
    <source>
        <strain>MIT 9301</strain>
    </source>
</reference>
<evidence type="ECO:0000255" key="1">
    <source>
        <dbReference type="HAMAP-Rule" id="MF_00451"/>
    </source>
</evidence>
<gene>
    <name evidence="1" type="primary">ndk</name>
    <name type="ordered locus">P9301_00491</name>
</gene>
<feature type="chain" id="PRO_1000026269" description="Nucleoside diphosphate kinase">
    <location>
        <begin position="1"/>
        <end position="152"/>
    </location>
</feature>
<feature type="active site" description="Pros-phosphohistidine intermediate" evidence="1">
    <location>
        <position position="117"/>
    </location>
</feature>
<feature type="binding site" evidence="1">
    <location>
        <position position="11"/>
    </location>
    <ligand>
        <name>ATP</name>
        <dbReference type="ChEBI" id="CHEBI:30616"/>
    </ligand>
</feature>
<feature type="binding site" evidence="1">
    <location>
        <position position="59"/>
    </location>
    <ligand>
        <name>ATP</name>
        <dbReference type="ChEBI" id="CHEBI:30616"/>
    </ligand>
</feature>
<feature type="binding site" evidence="1">
    <location>
        <position position="87"/>
    </location>
    <ligand>
        <name>ATP</name>
        <dbReference type="ChEBI" id="CHEBI:30616"/>
    </ligand>
</feature>
<feature type="binding site" evidence="1">
    <location>
        <position position="93"/>
    </location>
    <ligand>
        <name>ATP</name>
        <dbReference type="ChEBI" id="CHEBI:30616"/>
    </ligand>
</feature>
<feature type="binding site" evidence="1">
    <location>
        <position position="104"/>
    </location>
    <ligand>
        <name>ATP</name>
        <dbReference type="ChEBI" id="CHEBI:30616"/>
    </ligand>
</feature>
<feature type="binding site" evidence="1">
    <location>
        <position position="114"/>
    </location>
    <ligand>
        <name>ATP</name>
        <dbReference type="ChEBI" id="CHEBI:30616"/>
    </ligand>
</feature>
<proteinExistence type="inferred from homology"/>
<sequence length="152" mass="17149">MTKERTFIAIKPDGVQRGYVSEIIGRFEKKGFKLVGLKQLIPSKELAQNHYGVHRERPFFGDLVDFISSGPVVAMVWEGEGVILSARKLIGSTKPLEAEPGTIRGDLAIDIGRNIIHGSDGEDTAKFEIDLWFNEEELCEWETSDLKWRSEN</sequence>
<comment type="function">
    <text evidence="1">Major role in the synthesis of nucleoside triphosphates other than ATP. The ATP gamma phosphate is transferred to the NDP beta phosphate via a ping-pong mechanism, using a phosphorylated active-site intermediate.</text>
</comment>
<comment type="catalytic activity">
    <reaction evidence="1">
        <text>a 2'-deoxyribonucleoside 5'-diphosphate + ATP = a 2'-deoxyribonucleoside 5'-triphosphate + ADP</text>
        <dbReference type="Rhea" id="RHEA:44640"/>
        <dbReference type="ChEBI" id="CHEBI:30616"/>
        <dbReference type="ChEBI" id="CHEBI:61560"/>
        <dbReference type="ChEBI" id="CHEBI:73316"/>
        <dbReference type="ChEBI" id="CHEBI:456216"/>
        <dbReference type="EC" id="2.7.4.6"/>
    </reaction>
</comment>
<comment type="catalytic activity">
    <reaction evidence="1">
        <text>a ribonucleoside 5'-diphosphate + ATP = a ribonucleoside 5'-triphosphate + ADP</text>
        <dbReference type="Rhea" id="RHEA:18113"/>
        <dbReference type="ChEBI" id="CHEBI:30616"/>
        <dbReference type="ChEBI" id="CHEBI:57930"/>
        <dbReference type="ChEBI" id="CHEBI:61557"/>
        <dbReference type="ChEBI" id="CHEBI:456216"/>
        <dbReference type="EC" id="2.7.4.6"/>
    </reaction>
</comment>
<comment type="cofactor">
    <cofactor evidence="1">
        <name>Mg(2+)</name>
        <dbReference type="ChEBI" id="CHEBI:18420"/>
    </cofactor>
</comment>
<comment type="subunit">
    <text evidence="1">Homotetramer.</text>
</comment>
<comment type="subcellular location">
    <subcellularLocation>
        <location evidence="1">Cytoplasm</location>
    </subcellularLocation>
</comment>
<comment type="similarity">
    <text evidence="1">Belongs to the NDK family.</text>
</comment>
<name>NDK_PROM0</name>
<keyword id="KW-0067">ATP-binding</keyword>
<keyword id="KW-0963">Cytoplasm</keyword>
<keyword id="KW-0418">Kinase</keyword>
<keyword id="KW-0460">Magnesium</keyword>
<keyword id="KW-0479">Metal-binding</keyword>
<keyword id="KW-0546">Nucleotide metabolism</keyword>
<keyword id="KW-0547">Nucleotide-binding</keyword>
<keyword id="KW-0597">Phosphoprotein</keyword>
<keyword id="KW-1185">Reference proteome</keyword>
<keyword id="KW-0808">Transferase</keyword>